<keyword id="KW-0007">Acetylation</keyword>
<keyword id="KW-0472">Membrane</keyword>
<keyword id="KW-0496">Mitochondrion</keyword>
<keyword id="KW-0999">Mitochondrion inner membrane</keyword>
<keyword id="KW-0597">Phosphoprotein</keyword>
<keyword id="KW-0812">Transmembrane</keyword>
<keyword id="KW-1133">Transmembrane helix</keyword>
<accession>O46585</accession>
<reference key="1">
    <citation type="journal article" date="1997" name="J. Mol. Evol.">
        <title>Molecular evolution of cytochrome c oxidase subunit IV: evidence for positive selection in simian primates.</title>
        <authorList>
            <person name="Wu W."/>
            <person name="Goodman M."/>
            <person name="Lomax M.I."/>
            <person name="Grossman L.I."/>
        </authorList>
    </citation>
    <scope>NUCLEOTIDE SEQUENCE [GENOMIC DNA]</scope>
</reference>
<name>COX41_PITPI</name>
<gene>
    <name type="primary">COX4I1</name>
    <name type="synonym">COX4</name>
</gene>
<dbReference type="EMBL" id="AH005841">
    <property type="protein sequence ID" value="AAB97849.1"/>
    <property type="molecule type" value="Genomic_DNA"/>
</dbReference>
<dbReference type="SMR" id="O46585"/>
<dbReference type="UniPathway" id="UPA00705"/>
<dbReference type="GO" id="GO:0005743">
    <property type="term" value="C:mitochondrial inner membrane"/>
    <property type="evidence" value="ECO:0000250"/>
    <property type="project" value="UniProtKB"/>
</dbReference>
<dbReference type="GO" id="GO:0045277">
    <property type="term" value="C:respiratory chain complex IV"/>
    <property type="evidence" value="ECO:0007669"/>
    <property type="project" value="InterPro"/>
</dbReference>
<dbReference type="GO" id="GO:0006123">
    <property type="term" value="P:mitochondrial electron transport, cytochrome c to oxygen"/>
    <property type="evidence" value="ECO:0007669"/>
    <property type="project" value="InterPro"/>
</dbReference>
<dbReference type="CDD" id="cd00922">
    <property type="entry name" value="Cyt_c_Oxidase_IV"/>
    <property type="match status" value="1"/>
</dbReference>
<dbReference type="FunFam" id="1.10.442.10:FF:000001">
    <property type="entry name" value="Cytochrome c oxidase subunit 4 isoform 1"/>
    <property type="match status" value="1"/>
</dbReference>
<dbReference type="Gene3D" id="1.10.442.10">
    <property type="entry name" value="Cytochrome c oxidase subunit IV"/>
    <property type="match status" value="1"/>
</dbReference>
<dbReference type="InterPro" id="IPR013288">
    <property type="entry name" value="Cyt_c_oxidase_su4"/>
</dbReference>
<dbReference type="InterPro" id="IPR004203">
    <property type="entry name" value="Cyt_c_oxidase_su4_fam"/>
</dbReference>
<dbReference type="InterPro" id="IPR036639">
    <property type="entry name" value="Cyt_c_oxidase_su4_sf"/>
</dbReference>
<dbReference type="PANTHER" id="PTHR10707:SF12">
    <property type="entry name" value="CYTOCHROME C OXIDASE SUBUNIT 4 ISOFORM 1, MITOCHONDRIAL"/>
    <property type="match status" value="1"/>
</dbReference>
<dbReference type="PANTHER" id="PTHR10707">
    <property type="entry name" value="CYTOCHROME C OXIDASE SUBUNIT IV"/>
    <property type="match status" value="1"/>
</dbReference>
<dbReference type="Pfam" id="PF02936">
    <property type="entry name" value="COX4"/>
    <property type="match status" value="1"/>
</dbReference>
<dbReference type="PRINTS" id="PR01873">
    <property type="entry name" value="CYTCOXIDASE4"/>
</dbReference>
<dbReference type="SUPFAM" id="SSF81406">
    <property type="entry name" value="Mitochondrial cytochrome c oxidase subunit IV"/>
    <property type="match status" value="1"/>
</dbReference>
<feature type="chain" id="PRO_0000194079" description="Cytochrome c oxidase subunit 4 isoform 1, mitochondrial">
    <location>
        <begin position="1" status="less than"/>
        <end position="144"/>
    </location>
</feature>
<feature type="topological domain" description="Mitochondrial matrix" evidence="1">
    <location>
        <begin position="1" status="less than"/>
        <end position="73"/>
    </location>
</feature>
<feature type="transmembrane region" description="Helical" evidence="1">
    <location>
        <begin position="74"/>
        <end position="99"/>
    </location>
</feature>
<feature type="topological domain" description="Mitochondrial intermembrane" evidence="1">
    <location>
        <begin position="100"/>
        <end position="144"/>
    </location>
</feature>
<feature type="modified residue" description="N6-acetyllysine; alternate" evidence="5">
    <location>
        <position position="4"/>
    </location>
</feature>
<feature type="modified residue" description="N6-succinyllysine; alternate" evidence="5">
    <location>
        <position position="4"/>
    </location>
</feature>
<feature type="modified residue" description="Phosphoserine" evidence="3">
    <location>
        <position position="31"/>
    </location>
</feature>
<feature type="modified residue" description="Phosphoserine" evidence="3">
    <location>
        <position position="33"/>
    </location>
</feature>
<feature type="modified residue" description="N6-acetyllysine; alternate" evidence="4">
    <location>
        <position position="35"/>
    </location>
</feature>
<feature type="modified residue" description="N6-succinyllysine; alternate" evidence="5">
    <location>
        <position position="35"/>
    </location>
</feature>
<feature type="modified residue" description="N6-acetyllysine" evidence="5">
    <location>
        <position position="42"/>
    </location>
</feature>
<feature type="non-terminal residue">
    <location>
        <position position="1"/>
    </location>
</feature>
<proteinExistence type="inferred from homology"/>
<organism>
    <name type="scientific">Pithecia pithecia</name>
    <name type="common">White-faced saki</name>
    <dbReference type="NCBI Taxonomy" id="43777"/>
    <lineage>
        <taxon>Eukaryota</taxon>
        <taxon>Metazoa</taxon>
        <taxon>Chordata</taxon>
        <taxon>Craniata</taxon>
        <taxon>Vertebrata</taxon>
        <taxon>Euteleostomi</taxon>
        <taxon>Mammalia</taxon>
        <taxon>Eutheria</taxon>
        <taxon>Euarchontoglires</taxon>
        <taxon>Primates</taxon>
        <taxon>Haplorrhini</taxon>
        <taxon>Platyrrhini</taxon>
        <taxon>Pitheciidae</taxon>
        <taxon>Pitheciinae</taxon>
        <taxon>Pithecia</taxon>
    </lineage>
</organism>
<protein>
    <recommendedName>
        <fullName>Cytochrome c oxidase subunit 4 isoform 1, mitochondrial</fullName>
    </recommendedName>
    <alternativeName>
        <fullName>Cytochrome c oxidase polypeptide IV</fullName>
    </alternativeName>
    <alternativeName>
        <fullName>Cytochrome c oxidase subunit IV isoform 1</fullName>
        <shortName>COX IV-1</shortName>
    </alternativeName>
</protein>
<sequence>SVVKSEDYTLQSYVDRRDYPLPDVAHVRHLSASQKALKEKEKASWSSLSMDEKVELYRIQFKESFAEMNRGSNEWKTVVGAAMFFIGFTAILIMLEKRYVYGPLPHTFDKEWVAMQTKRMLDLKVNPVDGLASKWDYEKKEWKK</sequence>
<evidence type="ECO:0000250" key="1">
    <source>
        <dbReference type="UniProtKB" id="P00423"/>
    </source>
</evidence>
<evidence type="ECO:0000250" key="2">
    <source>
        <dbReference type="UniProtKB" id="P00424"/>
    </source>
</evidence>
<evidence type="ECO:0000250" key="3">
    <source>
        <dbReference type="UniProtKB" id="P10888"/>
    </source>
</evidence>
<evidence type="ECO:0000250" key="4">
    <source>
        <dbReference type="UniProtKB" id="P13073"/>
    </source>
</evidence>
<evidence type="ECO:0000250" key="5">
    <source>
        <dbReference type="UniProtKB" id="P19783"/>
    </source>
</evidence>
<evidence type="ECO:0000305" key="6"/>
<comment type="function">
    <text evidence="2">Component of the cytochrome c oxidase, the last enzyme in the mitochondrial electron transport chain which drives oxidative phosphorylation. The respiratory chain contains 3 multisubunit complexes succinate dehydrogenase (complex II, CII), ubiquinol-cytochrome c oxidoreductase (cytochrome b-c1 complex, complex III, CIII) and cytochrome c oxidase (complex IV, CIV), that cooperate to transfer electrons derived from NADH and succinate to molecular oxygen, creating an electrochemical gradient over the inner membrane that drives transmembrane transport and the ATP synthase. Cytochrome c oxidase is the component of the respiratory chain that catalyzes the reduction of oxygen to water. Electrons originating from reduced cytochrome c in the intermembrane space (IMS) are transferred via the dinuclear copper A center (CU(A)) of subunit 2 and heme A of subunit 1 to the active site in subunit 1, a binuclear center (BNC) formed by heme A3 and copper B (CU(B)). The BNC reduces molecular oxygen to 2 water molecules using 4 electrons from cytochrome c in the IMS and 4 protons from the mitochondrial matrix.</text>
</comment>
<comment type="pathway">
    <text evidence="2">Energy metabolism; oxidative phosphorylation.</text>
</comment>
<comment type="subunit">
    <text evidence="1 3 4 5">Component of the cytochrome c oxidase (complex IV, CIV), a multisubunit enzyme composed of 14 subunits. The complex is composed of a catalytic core of 3 subunits MT-CO1, MT-CO2 and MT-CO3, encoded in the mitochondrial DNA, and 11 supernumerary subunits COX4I, COX5A, COX5B, COX6A, COX6B, COX6C, COX7A, COX7B, COX7C, COX8 and NDUFA4, which are encoded in the nuclear genome. The complex exists as a monomer or a dimer and forms supercomplexes (SCs) in the inner mitochondrial membrane with NADH-ubiquinone oxidoreductase (complex I, CI) and ubiquinol-cytochrome c oxidoreductase (cytochrome b-c1 complex, complex III, CIII), resulting in different assemblies (supercomplex SCI(1)III(2)IV(1) and megacomplex MCI(2)III(2)IV(2)) (By similarity). Interacts with PHB2; the interaction decreases in absence of SPHK2 (By similarity). Interacts with AFG1L (By similarity). Interacts with ABCB7; this interaction allows the regulation of cellular iron homeostasis and cellular reactive oxygen species (ROS) levels in cardiomyocytes (By similarity). Interacts with FLVCR2; this interaction occurs in the absence of heme and is disrupted upon heme binding. Interacts with IRGC (By similarity).</text>
</comment>
<comment type="subcellular location">
    <subcellularLocation>
        <location evidence="1">Mitochondrion inner membrane</location>
        <topology evidence="1">Single-pass membrane protein</topology>
    </subcellularLocation>
</comment>
<comment type="similarity">
    <text evidence="6">Belongs to the cytochrome c oxidase IV family.</text>
</comment>